<sequence>MLLAEIISVGTELLFGEIVDSNAAFLARELGERGVTLHRKTVLGDNLGRVSEGLALALSRADLVIVGGGLGPTDDDLTREAIAAVMQETPAEDPELLAWLRGLYEARGRVMPEVNRKQAWLIPSAEALPNPVGTAPGWFVRRQTEQGEKIIVALPGPPREMHKMWREQVLPRLPLPGRALVHTTIHTQGIGESNVAEILGELTRQANPSVATYFRKTGVDVRVAASADTEAEARALLAPVLDDVRGKLARWTWGEDGQTLAGAVGQQLAGRTLGVIEAGSAGALSLLLADEPAFHDAAVTQDHRRLITLGLTPVTLKEAGLVSEQAARELAAGAREHLASDVGLSVVVGVTGERAGQAYAALDTGTLQKTVTVNWPGDPEQVRERAAVAALGLAFRALAAGGEG</sequence>
<evidence type="ECO:0000255" key="1">
    <source>
        <dbReference type="HAMAP-Rule" id="MF_00226"/>
    </source>
</evidence>
<accession>O32508</accession>
<comment type="similarity">
    <text evidence="1">Belongs to the CinA family.</text>
</comment>
<dbReference type="EMBL" id="AB005471">
    <property type="protein sequence ID" value="BAA21328.1"/>
    <property type="molecule type" value="Genomic_DNA"/>
</dbReference>
<dbReference type="EMBL" id="AE000513">
    <property type="protein sequence ID" value="AAF11885.1"/>
    <property type="molecule type" value="Genomic_DNA"/>
</dbReference>
<dbReference type="PIR" id="A75285">
    <property type="entry name" value="A75285"/>
</dbReference>
<dbReference type="RefSeq" id="NP_296059.1">
    <property type="nucleotide sequence ID" value="NC_001263.1"/>
</dbReference>
<dbReference type="RefSeq" id="WP_010888964.1">
    <property type="nucleotide sequence ID" value="NC_001263.1"/>
</dbReference>
<dbReference type="SMR" id="O32508"/>
<dbReference type="FunCoup" id="O32508">
    <property type="interactions" value="140"/>
</dbReference>
<dbReference type="STRING" id="243230.DR_2338"/>
<dbReference type="PaxDb" id="243230-DR_2338"/>
<dbReference type="EnsemblBacteria" id="AAF11885">
    <property type="protein sequence ID" value="AAF11885"/>
    <property type="gene ID" value="DR_2338"/>
</dbReference>
<dbReference type="GeneID" id="69518587"/>
<dbReference type="KEGG" id="dra:DR_2338"/>
<dbReference type="PATRIC" id="fig|243230.17.peg.2569"/>
<dbReference type="eggNOG" id="COG1058">
    <property type="taxonomic scope" value="Bacteria"/>
</dbReference>
<dbReference type="eggNOG" id="COG1546">
    <property type="taxonomic scope" value="Bacteria"/>
</dbReference>
<dbReference type="HOGENOM" id="CLU_030805_9_3_0"/>
<dbReference type="InParanoid" id="O32508"/>
<dbReference type="OrthoDB" id="9801454at2"/>
<dbReference type="Proteomes" id="UP000002524">
    <property type="component" value="Chromosome 1"/>
</dbReference>
<dbReference type="CDD" id="cd00885">
    <property type="entry name" value="cinA"/>
    <property type="match status" value="1"/>
</dbReference>
<dbReference type="Gene3D" id="3.30.70.2860">
    <property type="match status" value="1"/>
</dbReference>
<dbReference type="Gene3D" id="3.90.950.20">
    <property type="entry name" value="CinA-like"/>
    <property type="match status" value="1"/>
</dbReference>
<dbReference type="Gene3D" id="3.40.980.10">
    <property type="entry name" value="MoaB/Mog-like domain"/>
    <property type="match status" value="1"/>
</dbReference>
<dbReference type="HAMAP" id="MF_00226_B">
    <property type="entry name" value="CinA_B"/>
    <property type="match status" value="1"/>
</dbReference>
<dbReference type="InterPro" id="IPR050101">
    <property type="entry name" value="CinA"/>
</dbReference>
<dbReference type="InterPro" id="IPR036653">
    <property type="entry name" value="CinA-like_C"/>
</dbReference>
<dbReference type="InterPro" id="IPR008136">
    <property type="entry name" value="CinA_C"/>
</dbReference>
<dbReference type="InterPro" id="IPR041424">
    <property type="entry name" value="CinA_KH"/>
</dbReference>
<dbReference type="InterPro" id="IPR008135">
    <property type="entry name" value="Competence-induced_CinA"/>
</dbReference>
<dbReference type="InterPro" id="IPR036425">
    <property type="entry name" value="MoaB/Mog-like_dom_sf"/>
</dbReference>
<dbReference type="InterPro" id="IPR001453">
    <property type="entry name" value="MoaB/Mog_dom"/>
</dbReference>
<dbReference type="NCBIfam" id="TIGR00200">
    <property type="entry name" value="cinA_nterm"/>
    <property type="match status" value="1"/>
</dbReference>
<dbReference type="PANTHER" id="PTHR13939">
    <property type="entry name" value="NICOTINAMIDE-NUCLEOTIDE AMIDOHYDROLASE PNCC"/>
    <property type="match status" value="1"/>
</dbReference>
<dbReference type="PANTHER" id="PTHR13939:SF0">
    <property type="entry name" value="NMN AMIDOHYDROLASE-LIKE PROTEIN YFAY"/>
    <property type="match status" value="1"/>
</dbReference>
<dbReference type="Pfam" id="PF02464">
    <property type="entry name" value="CinA"/>
    <property type="match status" value="1"/>
</dbReference>
<dbReference type="Pfam" id="PF18146">
    <property type="entry name" value="CinA_KH"/>
    <property type="match status" value="1"/>
</dbReference>
<dbReference type="Pfam" id="PF00994">
    <property type="entry name" value="MoCF_biosynth"/>
    <property type="match status" value="1"/>
</dbReference>
<dbReference type="PIRSF" id="PIRSF006728">
    <property type="entry name" value="CinA"/>
    <property type="match status" value="1"/>
</dbReference>
<dbReference type="SMART" id="SM00852">
    <property type="entry name" value="MoCF_biosynth"/>
    <property type="match status" value="1"/>
</dbReference>
<dbReference type="SUPFAM" id="SSF142433">
    <property type="entry name" value="CinA-like"/>
    <property type="match status" value="1"/>
</dbReference>
<dbReference type="SUPFAM" id="SSF53218">
    <property type="entry name" value="Molybdenum cofactor biosynthesis proteins"/>
    <property type="match status" value="1"/>
</dbReference>
<keyword id="KW-1185">Reference proteome</keyword>
<protein>
    <recommendedName>
        <fullName evidence="1">CinA-like protein</fullName>
    </recommendedName>
</protein>
<organism>
    <name type="scientific">Deinococcus radiodurans (strain ATCC 13939 / DSM 20539 / JCM 16871 / CCUG 27074 / LMG 4051 / NBRC 15346 / NCIMB 9279 / VKM B-1422 / R1)</name>
    <dbReference type="NCBI Taxonomy" id="243230"/>
    <lineage>
        <taxon>Bacteria</taxon>
        <taxon>Thermotogati</taxon>
        <taxon>Deinococcota</taxon>
        <taxon>Deinococci</taxon>
        <taxon>Deinococcales</taxon>
        <taxon>Deinococcaceae</taxon>
        <taxon>Deinococcus</taxon>
    </lineage>
</organism>
<name>CINAL_DEIRA</name>
<proteinExistence type="inferred from homology"/>
<reference key="1">
    <citation type="journal article" date="1999" name="Mutat. Res.">
        <title>Molecular analysis of the Deinococcus radiodurans recA locus and identification of a mutation site in a DNA repair-deficient mutant, rec30.</title>
        <authorList>
            <person name="Narumi I."/>
            <person name="Satoh K."/>
            <person name="Kikuchi M."/>
            <person name="Funayama T."/>
            <person name="Kitayama S."/>
            <person name="Yanagisawa T."/>
            <person name="Watanabe H."/>
            <person name="Yamamoto K."/>
        </authorList>
    </citation>
    <scope>NUCLEOTIDE SEQUENCE [GENOMIC DNA]</scope>
    <source>
        <strain>KD8301</strain>
    </source>
</reference>
<reference key="2">
    <citation type="journal article" date="1999" name="Science">
        <title>Genome sequence of the radioresistant bacterium Deinococcus radiodurans R1.</title>
        <authorList>
            <person name="White O."/>
            <person name="Eisen J.A."/>
            <person name="Heidelberg J.F."/>
            <person name="Hickey E.K."/>
            <person name="Peterson J.D."/>
            <person name="Dodson R.J."/>
            <person name="Haft D.H."/>
            <person name="Gwinn M.L."/>
            <person name="Nelson W.C."/>
            <person name="Richardson D.L."/>
            <person name="Moffat K.S."/>
            <person name="Qin H."/>
            <person name="Jiang L."/>
            <person name="Pamphile W."/>
            <person name="Crosby M."/>
            <person name="Shen M."/>
            <person name="Vamathevan J.J."/>
            <person name="Lam P."/>
            <person name="McDonald L.A."/>
            <person name="Utterback T.R."/>
            <person name="Zalewski C."/>
            <person name="Makarova K.S."/>
            <person name="Aravind L."/>
            <person name="Daly M.J."/>
            <person name="Minton K.W."/>
            <person name="Fleischmann R.D."/>
            <person name="Ketchum K.A."/>
            <person name="Nelson K.E."/>
            <person name="Salzberg S.L."/>
            <person name="Smith H.O."/>
            <person name="Venter J.C."/>
            <person name="Fraser C.M."/>
        </authorList>
    </citation>
    <scope>NUCLEOTIDE SEQUENCE [LARGE SCALE GENOMIC DNA]</scope>
    <source>
        <strain>ATCC 13939 / DSM 20539 / JCM 16871 / CCUG 27074 / LMG 4051 / NBRC 15346 / NCIMB 9279 / VKM B-1422 / R1</strain>
    </source>
</reference>
<feature type="chain" id="PRO_0000156757" description="CinA-like protein">
    <location>
        <begin position="1"/>
        <end position="404"/>
    </location>
</feature>
<gene>
    <name evidence="1" type="primary">cinA</name>
    <name type="ordered locus">DR_2338</name>
</gene>